<protein>
    <recommendedName>
        <fullName evidence="1">Glycine cleavage system H protein</fullName>
    </recommendedName>
</protein>
<evidence type="ECO:0000255" key="1">
    <source>
        <dbReference type="HAMAP-Rule" id="MF_00272"/>
    </source>
</evidence>
<evidence type="ECO:0000255" key="2">
    <source>
        <dbReference type="PROSITE-ProRule" id="PRU01066"/>
    </source>
</evidence>
<name>GCSH_CLASE</name>
<feature type="chain" id="PRO_1000078725" description="Glycine cleavage system H protein">
    <location>
        <begin position="1"/>
        <end position="123"/>
    </location>
</feature>
<feature type="domain" description="Lipoyl-binding" evidence="2">
    <location>
        <begin position="22"/>
        <end position="104"/>
    </location>
</feature>
<feature type="modified residue" description="N6-lipoyllysine" evidence="1">
    <location>
        <position position="63"/>
    </location>
</feature>
<organism>
    <name type="scientific">Clavibacter sepedonicus</name>
    <name type="common">Clavibacter michiganensis subsp. sepedonicus</name>
    <dbReference type="NCBI Taxonomy" id="31964"/>
    <lineage>
        <taxon>Bacteria</taxon>
        <taxon>Bacillati</taxon>
        <taxon>Actinomycetota</taxon>
        <taxon>Actinomycetes</taxon>
        <taxon>Micrococcales</taxon>
        <taxon>Microbacteriaceae</taxon>
        <taxon>Clavibacter</taxon>
    </lineage>
</organism>
<comment type="function">
    <text evidence="1">The glycine cleavage system catalyzes the degradation of glycine. The H protein shuttles the methylamine group of glycine from the P protein to the T protein.</text>
</comment>
<comment type="cofactor">
    <cofactor evidence="1">
        <name>(R)-lipoate</name>
        <dbReference type="ChEBI" id="CHEBI:83088"/>
    </cofactor>
    <text evidence="1">Binds 1 lipoyl cofactor covalently.</text>
</comment>
<comment type="subunit">
    <text evidence="1">The glycine cleavage system is composed of four proteins: P, T, L and H.</text>
</comment>
<comment type="similarity">
    <text evidence="1">Belongs to the GcvH family.</text>
</comment>
<reference key="1">
    <citation type="journal article" date="2008" name="J. Bacteriol.">
        <title>Genome of the actinomycete plant pathogen Clavibacter michiganensis subsp. sepedonicus suggests recent niche adaptation.</title>
        <authorList>
            <person name="Bentley S.D."/>
            <person name="Corton C."/>
            <person name="Brown S.E."/>
            <person name="Barron A."/>
            <person name="Clark L."/>
            <person name="Doggett J."/>
            <person name="Harris B."/>
            <person name="Ormond D."/>
            <person name="Quail M.A."/>
            <person name="May G."/>
            <person name="Francis D."/>
            <person name="Knudson D."/>
            <person name="Parkhill J."/>
            <person name="Ishimaru C.A."/>
        </authorList>
    </citation>
    <scope>NUCLEOTIDE SEQUENCE [LARGE SCALE GENOMIC DNA]</scope>
    <source>
        <strain>ATCC 33113 / DSM 20744 / JCM 9667 / LMG 2889 / ICMP 2535 / C-1</strain>
    </source>
</reference>
<dbReference type="EMBL" id="AM849034">
    <property type="protein sequence ID" value="CAQ02315.1"/>
    <property type="molecule type" value="Genomic_DNA"/>
</dbReference>
<dbReference type="RefSeq" id="WP_012299523.1">
    <property type="nucleotide sequence ID" value="NZ_MZMN01000003.1"/>
</dbReference>
<dbReference type="SMR" id="B0RG24"/>
<dbReference type="STRING" id="31964.CMS2223"/>
<dbReference type="KEGG" id="cms:CMS2223"/>
<dbReference type="eggNOG" id="COG0509">
    <property type="taxonomic scope" value="Bacteria"/>
</dbReference>
<dbReference type="HOGENOM" id="CLU_097408_2_2_11"/>
<dbReference type="OrthoDB" id="9796712at2"/>
<dbReference type="Proteomes" id="UP000001318">
    <property type="component" value="Chromosome"/>
</dbReference>
<dbReference type="GO" id="GO:0005829">
    <property type="term" value="C:cytosol"/>
    <property type="evidence" value="ECO:0007669"/>
    <property type="project" value="TreeGrafter"/>
</dbReference>
<dbReference type="GO" id="GO:0005960">
    <property type="term" value="C:glycine cleavage complex"/>
    <property type="evidence" value="ECO:0007669"/>
    <property type="project" value="InterPro"/>
</dbReference>
<dbReference type="GO" id="GO:0019464">
    <property type="term" value="P:glycine decarboxylation via glycine cleavage system"/>
    <property type="evidence" value="ECO:0007669"/>
    <property type="project" value="UniProtKB-UniRule"/>
</dbReference>
<dbReference type="CDD" id="cd06848">
    <property type="entry name" value="GCS_H"/>
    <property type="match status" value="1"/>
</dbReference>
<dbReference type="Gene3D" id="2.40.50.100">
    <property type="match status" value="1"/>
</dbReference>
<dbReference type="HAMAP" id="MF_00272">
    <property type="entry name" value="GcvH"/>
    <property type="match status" value="1"/>
</dbReference>
<dbReference type="InterPro" id="IPR003016">
    <property type="entry name" value="2-oxoA_DH_lipoyl-BS"/>
</dbReference>
<dbReference type="InterPro" id="IPR000089">
    <property type="entry name" value="Biotin_lipoyl"/>
</dbReference>
<dbReference type="InterPro" id="IPR002930">
    <property type="entry name" value="GCV_H"/>
</dbReference>
<dbReference type="InterPro" id="IPR033753">
    <property type="entry name" value="GCV_H/Fam206"/>
</dbReference>
<dbReference type="InterPro" id="IPR017453">
    <property type="entry name" value="GCV_H_sub"/>
</dbReference>
<dbReference type="InterPro" id="IPR011053">
    <property type="entry name" value="Single_hybrid_motif"/>
</dbReference>
<dbReference type="NCBIfam" id="TIGR00527">
    <property type="entry name" value="gcvH"/>
    <property type="match status" value="1"/>
</dbReference>
<dbReference type="NCBIfam" id="NF002270">
    <property type="entry name" value="PRK01202.1"/>
    <property type="match status" value="1"/>
</dbReference>
<dbReference type="PANTHER" id="PTHR11715">
    <property type="entry name" value="GLYCINE CLEAVAGE SYSTEM H PROTEIN"/>
    <property type="match status" value="1"/>
</dbReference>
<dbReference type="PANTHER" id="PTHR11715:SF3">
    <property type="entry name" value="GLYCINE CLEAVAGE SYSTEM H PROTEIN-RELATED"/>
    <property type="match status" value="1"/>
</dbReference>
<dbReference type="Pfam" id="PF01597">
    <property type="entry name" value="GCV_H"/>
    <property type="match status" value="1"/>
</dbReference>
<dbReference type="SUPFAM" id="SSF51230">
    <property type="entry name" value="Single hybrid motif"/>
    <property type="match status" value="1"/>
</dbReference>
<dbReference type="PROSITE" id="PS50968">
    <property type="entry name" value="BIOTINYL_LIPOYL"/>
    <property type="match status" value="1"/>
</dbReference>
<dbReference type="PROSITE" id="PS00189">
    <property type="entry name" value="LIPOYL"/>
    <property type="match status" value="1"/>
</dbReference>
<accession>B0RG24</accession>
<keyword id="KW-0450">Lipoyl</keyword>
<gene>
    <name evidence="1" type="primary">gcvH</name>
    <name type="ordered locus">CMS2223</name>
</gene>
<proteinExistence type="inferred from homology"/>
<sequence length="123" mass="12953">MTDQTSLQYTAEHEWVLIDGDVATVGITSYAADKLGDVVFVELPAVGDELAGGSVVGEIESTKSVGELFAPIDGTVTEVNDDVVASPDLVNSDPFGAGWLVKVRFEALPTLLSHDEYVALVGE</sequence>